<feature type="chain" id="PRO_0000063681" description="Keratin, type I cytoskeletal 47 kDa">
    <location>
        <begin position="1"/>
        <end position="419"/>
    </location>
</feature>
<feature type="domain" description="IF rod" evidence="1">
    <location>
        <begin position="82"/>
        <end position="397"/>
    </location>
</feature>
<feature type="region of interest" description="Head">
    <location>
        <begin position="1"/>
        <end position="81"/>
    </location>
</feature>
<feature type="region of interest" description="Coil 1A">
    <location>
        <begin position="82"/>
        <end position="117"/>
    </location>
</feature>
<feature type="region of interest" description="Linker 1">
    <location>
        <begin position="118"/>
        <end position="139"/>
    </location>
</feature>
<feature type="region of interest" description="Coil 1B">
    <location>
        <begin position="140"/>
        <end position="231"/>
    </location>
</feature>
<feature type="region of interest" description="Linker 12">
    <location>
        <begin position="232"/>
        <end position="254"/>
    </location>
</feature>
<feature type="region of interest" description="Coil 2">
    <location>
        <begin position="255"/>
        <end position="393"/>
    </location>
</feature>
<feature type="region of interest" description="Tail">
    <location>
        <begin position="394"/>
        <end position="419"/>
    </location>
</feature>
<accession>P05781</accession>
<dbReference type="EMBL" id="X04807">
    <property type="protein sequence ID" value="CAA28498.1"/>
    <property type="molecule type" value="Genomic_DNA"/>
</dbReference>
<dbReference type="EMBL" id="X12730">
    <property type="protein sequence ID" value="CAA31223.1"/>
    <property type="molecule type" value="Genomic_DNA"/>
</dbReference>
<dbReference type="EMBL" id="X05865">
    <property type="protein sequence ID" value="CAA29293.1"/>
    <property type="molecule type" value="mRNA"/>
</dbReference>
<dbReference type="PIR" id="A25438">
    <property type="entry name" value="A25438"/>
</dbReference>
<dbReference type="SMR" id="P05781"/>
<dbReference type="AGR" id="Xenbase:XB-GENE-1219328"/>
<dbReference type="Xenbase" id="XB-GENE-1219328">
    <property type="gene designation" value="krt12.5.S"/>
</dbReference>
<dbReference type="Proteomes" id="UP000186698">
    <property type="component" value="Unplaced"/>
</dbReference>
<dbReference type="GO" id="GO:0005856">
    <property type="term" value="C:cytoskeleton"/>
    <property type="evidence" value="ECO:0000318"/>
    <property type="project" value="GO_Central"/>
</dbReference>
<dbReference type="GO" id="GO:0005882">
    <property type="term" value="C:intermediate filament"/>
    <property type="evidence" value="ECO:0007669"/>
    <property type="project" value="UniProtKB-KW"/>
</dbReference>
<dbReference type="GO" id="GO:0005198">
    <property type="term" value="F:structural molecule activity"/>
    <property type="evidence" value="ECO:0007669"/>
    <property type="project" value="InterPro"/>
</dbReference>
<dbReference type="GO" id="GO:0030855">
    <property type="term" value="P:epithelial cell differentiation"/>
    <property type="evidence" value="ECO:0000318"/>
    <property type="project" value="GO_Central"/>
</dbReference>
<dbReference type="GO" id="GO:0045109">
    <property type="term" value="P:intermediate filament organization"/>
    <property type="evidence" value="ECO:0000318"/>
    <property type="project" value="GO_Central"/>
</dbReference>
<dbReference type="FunFam" id="1.20.5.1160:FF:000002">
    <property type="entry name" value="Type I keratin 10"/>
    <property type="match status" value="1"/>
</dbReference>
<dbReference type="FunFam" id="1.20.5.170:FF:000002">
    <property type="entry name" value="Type I keratin KA11"/>
    <property type="match status" value="1"/>
</dbReference>
<dbReference type="FunFam" id="1.20.5.500:FF:000001">
    <property type="entry name" value="Type II keratin 23"/>
    <property type="match status" value="1"/>
</dbReference>
<dbReference type="Gene3D" id="1.20.5.170">
    <property type="match status" value="1"/>
</dbReference>
<dbReference type="Gene3D" id="1.20.5.500">
    <property type="entry name" value="Single helix bin"/>
    <property type="match status" value="1"/>
</dbReference>
<dbReference type="Gene3D" id="1.20.5.1160">
    <property type="entry name" value="Vasodilator-stimulated phosphoprotein"/>
    <property type="match status" value="1"/>
</dbReference>
<dbReference type="InterPro" id="IPR018039">
    <property type="entry name" value="IF_conserved"/>
</dbReference>
<dbReference type="InterPro" id="IPR039008">
    <property type="entry name" value="IF_rod_dom"/>
</dbReference>
<dbReference type="InterPro" id="IPR002957">
    <property type="entry name" value="Keratin_I"/>
</dbReference>
<dbReference type="PANTHER" id="PTHR23239">
    <property type="entry name" value="INTERMEDIATE FILAMENT"/>
    <property type="match status" value="1"/>
</dbReference>
<dbReference type="PANTHER" id="PTHR23239:SF137">
    <property type="entry name" value="KERATIN, TYPE I CYTOSKELETAL 10"/>
    <property type="match status" value="1"/>
</dbReference>
<dbReference type="Pfam" id="PF00038">
    <property type="entry name" value="Filament"/>
    <property type="match status" value="1"/>
</dbReference>
<dbReference type="PRINTS" id="PR01248">
    <property type="entry name" value="TYPE1KERATIN"/>
</dbReference>
<dbReference type="SMART" id="SM01391">
    <property type="entry name" value="Filament"/>
    <property type="match status" value="1"/>
</dbReference>
<dbReference type="SUPFAM" id="SSF64593">
    <property type="entry name" value="Intermediate filament protein, coiled coil region"/>
    <property type="match status" value="2"/>
</dbReference>
<dbReference type="SUPFAM" id="SSF46579">
    <property type="entry name" value="Prefoldin"/>
    <property type="match status" value="1"/>
</dbReference>
<dbReference type="PROSITE" id="PS00226">
    <property type="entry name" value="IF_ROD_1"/>
    <property type="match status" value="1"/>
</dbReference>
<dbReference type="PROSITE" id="PS51842">
    <property type="entry name" value="IF_ROD_2"/>
    <property type="match status" value="1"/>
</dbReference>
<name>K1C4_XENLA</name>
<sequence>MSFRSSSSYSLQSKGISGGGGYGAGFGGGSGAGFGGGSGAGFGGGYGAGFGGGASSGFSLSSAGGFGAAAASSSFSNFGGNDKQTMQNLNDRLASYLEKVRALEAANADLELKIREWYEKQKGSGIGAGSKDFSKYFEIISDLRNKILSATIDNSRVVLQIDNAKLAADDFRLKFENELALRQSVETDINGLRRVLDELTLARGDLEMQIESLTEELAYLKKNHEEEMSIAKSSSAGQVNVEMDAAPGIDLNKILSDMRADYETLAEKNRRDAELWFNQKSGELKKEIQTGVEQVQTSKSEINDLRRSLQSLEIELQSQLAMKKSLEDTLAETDGRYGAQLQTIQFSLRSLEEQLLQIRSDMERQNMEYRQLLDIKTRLEMEIETYRRLLEGEFGSLKSSIVQATEVSTSQSSSSSKKD</sequence>
<keyword id="KW-0175">Coiled coil</keyword>
<keyword id="KW-0403">Intermediate filament</keyword>
<keyword id="KW-0416">Keratin</keyword>
<keyword id="KW-1185">Reference proteome</keyword>
<evidence type="ECO:0000255" key="1">
    <source>
        <dbReference type="PROSITE-ProRule" id="PRU01188"/>
    </source>
</evidence>
<organism>
    <name type="scientific">Xenopus laevis</name>
    <name type="common">African clawed frog</name>
    <dbReference type="NCBI Taxonomy" id="8355"/>
    <lineage>
        <taxon>Eukaryota</taxon>
        <taxon>Metazoa</taxon>
        <taxon>Chordata</taxon>
        <taxon>Craniata</taxon>
        <taxon>Vertebrata</taxon>
        <taxon>Euteleostomi</taxon>
        <taxon>Amphibia</taxon>
        <taxon>Batrachia</taxon>
        <taxon>Anura</taxon>
        <taxon>Pipoidea</taxon>
        <taxon>Pipidae</taxon>
        <taxon>Xenopodinae</taxon>
        <taxon>Xenopus</taxon>
        <taxon>Xenopus</taxon>
    </lineage>
</organism>
<gene>
    <name type="primary">xk81b2</name>
</gene>
<comment type="subunit">
    <text>Heterotetramer of two type I and two type II keratins.</text>
</comment>
<comment type="miscellaneous">
    <text>There are two types of cytoskeletal and microfibrillar keratin: I (acidic; 40-55 kDa) and II (neutral to basic; 56-70 kDa).</text>
</comment>
<comment type="similarity">
    <text evidence="1">Belongs to the intermediate filament family.</text>
</comment>
<protein>
    <recommendedName>
        <fullName>Keratin, type I cytoskeletal 47 kDa</fullName>
    </recommendedName>
</protein>
<reference key="1">
    <citation type="journal article" date="1986" name="J. Cell Biol.">
        <title>Stage-specific keratins in Xenopus laevis embryos and tadpoles: the XK81 gene family.</title>
        <authorList>
            <person name="Miyatani S."/>
            <person name="Winkles J.A."/>
            <person name="Sargent T.D."/>
            <person name="Dawid I.B."/>
        </authorList>
    </citation>
    <scope>NUCLEOTIDE SEQUENCE [GENOMIC DNA / MRNA]</scope>
</reference>
<proteinExistence type="evidence at transcript level"/>